<protein>
    <recommendedName>
        <fullName evidence="8">Cysteine synthase 1</fullName>
        <shortName evidence="7">CS 1</shortName>
        <ecNumber evidence="1">2.5.1.-</ecNumber>
        <ecNumber evidence="6">2.5.1.47</ecNumber>
    </recommendedName>
    <alternativeName>
        <fullName>O-acetylserine (thiol)-lyase 1</fullName>
        <shortName>OAS-TL 1</shortName>
    </alternativeName>
    <alternativeName>
        <fullName>O-acetylserine sulfhydrylase 1</fullName>
    </alternativeName>
    <alternativeName>
        <fullName evidence="1">O-succinylserine sulfhydrylase</fullName>
    </alternativeName>
</protein>
<dbReference type="EC" id="2.5.1.-" evidence="1"/>
<dbReference type="EC" id="2.5.1.47" evidence="6"/>
<dbReference type="EMBL" id="U19395">
    <property type="protein sequence ID" value="AAC06128.1"/>
    <property type="molecule type" value="Genomic_DNA"/>
</dbReference>
<dbReference type="EMBL" id="AACD01000139">
    <property type="protein sequence ID" value="EAA59679.1"/>
    <property type="molecule type" value="Genomic_DNA"/>
</dbReference>
<dbReference type="EMBL" id="BN001302">
    <property type="protein sequence ID" value="CBF73799.1"/>
    <property type="molecule type" value="Genomic_DNA"/>
</dbReference>
<dbReference type="RefSeq" id="XP_681326.1">
    <property type="nucleotide sequence ID" value="XM_676234.1"/>
</dbReference>
<dbReference type="SMR" id="P50867"/>
<dbReference type="STRING" id="227321.P50867"/>
<dbReference type="EnsemblFungi" id="CBF73799">
    <property type="protein sequence ID" value="CBF73799"/>
    <property type="gene ID" value="ANIA_08057"/>
</dbReference>
<dbReference type="KEGG" id="ani:ANIA_08057"/>
<dbReference type="VEuPathDB" id="FungiDB:AN8057"/>
<dbReference type="eggNOG" id="KOG1481">
    <property type="taxonomic scope" value="Eukaryota"/>
</dbReference>
<dbReference type="HOGENOM" id="CLU_021018_1_0_1"/>
<dbReference type="InParanoid" id="P50867"/>
<dbReference type="OMA" id="VVTVFWD"/>
<dbReference type="OrthoDB" id="10259545at2759"/>
<dbReference type="UniPathway" id="UPA00136">
    <property type="reaction ID" value="UER00200"/>
</dbReference>
<dbReference type="Proteomes" id="UP000000560">
    <property type="component" value="Chromosome II"/>
</dbReference>
<dbReference type="GO" id="GO:0005737">
    <property type="term" value="C:cytoplasm"/>
    <property type="evidence" value="ECO:0000318"/>
    <property type="project" value="GO_Central"/>
</dbReference>
<dbReference type="GO" id="GO:0005739">
    <property type="term" value="C:mitochondrion"/>
    <property type="evidence" value="ECO:0007669"/>
    <property type="project" value="UniProtKB-SubCell"/>
</dbReference>
<dbReference type="GO" id="GO:0004124">
    <property type="term" value="F:cysteine synthase activity"/>
    <property type="evidence" value="ECO:0000318"/>
    <property type="project" value="GO_Central"/>
</dbReference>
<dbReference type="GO" id="GO:0141223">
    <property type="term" value="F:cysteine synthase activity, acting on O-succinyl-L-serine"/>
    <property type="evidence" value="ECO:0007669"/>
    <property type="project" value="RHEA"/>
</dbReference>
<dbReference type="GO" id="GO:0008652">
    <property type="term" value="P:amino acid biosynthetic process"/>
    <property type="evidence" value="ECO:0000315"/>
    <property type="project" value="AspGD"/>
</dbReference>
<dbReference type="GO" id="GO:0006535">
    <property type="term" value="P:cysteine biosynthetic process from serine"/>
    <property type="evidence" value="ECO:0000318"/>
    <property type="project" value="GO_Central"/>
</dbReference>
<dbReference type="CDD" id="cd01561">
    <property type="entry name" value="CBS_like"/>
    <property type="match status" value="1"/>
</dbReference>
<dbReference type="FunFam" id="3.40.50.1100:FF:000011">
    <property type="entry name" value="Cysteine synthase (o-acetylserine)"/>
    <property type="match status" value="1"/>
</dbReference>
<dbReference type="Gene3D" id="3.40.50.1100">
    <property type="match status" value="2"/>
</dbReference>
<dbReference type="InterPro" id="IPR050214">
    <property type="entry name" value="Cys_Synth/Cystath_Beta-Synth"/>
</dbReference>
<dbReference type="InterPro" id="IPR001216">
    <property type="entry name" value="P-phosphate_BS"/>
</dbReference>
<dbReference type="InterPro" id="IPR001926">
    <property type="entry name" value="TrpB-like_PALP"/>
</dbReference>
<dbReference type="InterPro" id="IPR036052">
    <property type="entry name" value="TrpB-like_PALP_sf"/>
</dbReference>
<dbReference type="NCBIfam" id="NF007989">
    <property type="entry name" value="PRK10717.1"/>
    <property type="match status" value="1"/>
</dbReference>
<dbReference type="PANTHER" id="PTHR10314">
    <property type="entry name" value="CYSTATHIONINE BETA-SYNTHASE"/>
    <property type="match status" value="1"/>
</dbReference>
<dbReference type="Pfam" id="PF00291">
    <property type="entry name" value="PALP"/>
    <property type="match status" value="1"/>
</dbReference>
<dbReference type="SUPFAM" id="SSF53686">
    <property type="entry name" value="Tryptophan synthase beta subunit-like PLP-dependent enzymes"/>
    <property type="match status" value="1"/>
</dbReference>
<dbReference type="PROSITE" id="PS00901">
    <property type="entry name" value="CYS_SYNTHASE"/>
    <property type="match status" value="1"/>
</dbReference>
<reference key="1">
    <citation type="journal article" date="1997" name="Curr. Genet.">
        <title>Cloning and characterization of the Aspergillus nidulans cysB gene encoding cysteine synthase.</title>
        <authorList>
            <person name="Topczewski J."/>
            <person name="Sienko M."/>
            <person name="Paszewski A."/>
        </authorList>
    </citation>
    <scope>NUCLEOTIDE SEQUENCE [GENOMIC DNA]</scope>
    <source>
        <strain>ANA1 BIA1 PHENA2</strain>
    </source>
</reference>
<reference key="2">
    <citation type="journal article" date="2005" name="Nature">
        <title>Sequencing of Aspergillus nidulans and comparative analysis with A. fumigatus and A. oryzae.</title>
        <authorList>
            <person name="Galagan J.E."/>
            <person name="Calvo S.E."/>
            <person name="Cuomo C."/>
            <person name="Ma L.-J."/>
            <person name="Wortman J.R."/>
            <person name="Batzoglou S."/>
            <person name="Lee S.-I."/>
            <person name="Bastuerkmen M."/>
            <person name="Spevak C.C."/>
            <person name="Clutterbuck J."/>
            <person name="Kapitonov V."/>
            <person name="Jurka J."/>
            <person name="Scazzocchio C."/>
            <person name="Farman M.L."/>
            <person name="Butler J."/>
            <person name="Purcell S."/>
            <person name="Harris S."/>
            <person name="Braus G.H."/>
            <person name="Draht O."/>
            <person name="Busch S."/>
            <person name="D'Enfert C."/>
            <person name="Bouchier C."/>
            <person name="Goldman G.H."/>
            <person name="Bell-Pedersen D."/>
            <person name="Griffiths-Jones S."/>
            <person name="Doonan J.H."/>
            <person name="Yu J."/>
            <person name="Vienken K."/>
            <person name="Pain A."/>
            <person name="Freitag M."/>
            <person name="Selker E.U."/>
            <person name="Archer D.B."/>
            <person name="Penalva M.A."/>
            <person name="Oakley B.R."/>
            <person name="Momany M."/>
            <person name="Tanaka T."/>
            <person name="Kumagai T."/>
            <person name="Asai K."/>
            <person name="Machida M."/>
            <person name="Nierman W.C."/>
            <person name="Denning D.W."/>
            <person name="Caddick M.X."/>
            <person name="Hynes M."/>
            <person name="Paoletti M."/>
            <person name="Fischer R."/>
            <person name="Miller B.L."/>
            <person name="Dyer P.S."/>
            <person name="Sachs M.S."/>
            <person name="Osmani S.A."/>
            <person name="Birren B.W."/>
        </authorList>
    </citation>
    <scope>NUCLEOTIDE SEQUENCE [LARGE SCALE GENOMIC DNA]</scope>
    <source>
        <strain>FGSC A4 / ATCC 38163 / CBS 112.46 / NRRL 194 / M139</strain>
    </source>
</reference>
<reference key="3">
    <citation type="journal article" date="2009" name="Fungal Genet. Biol.">
        <title>The 2008 update of the Aspergillus nidulans genome annotation: a community effort.</title>
        <authorList>
            <person name="Wortman J.R."/>
            <person name="Gilsenan J.M."/>
            <person name="Joardar V."/>
            <person name="Deegan J."/>
            <person name="Clutterbuck J."/>
            <person name="Andersen M.R."/>
            <person name="Archer D."/>
            <person name="Bencina M."/>
            <person name="Braus G."/>
            <person name="Coutinho P."/>
            <person name="von Dohren H."/>
            <person name="Doonan J."/>
            <person name="Driessen A.J."/>
            <person name="Durek P."/>
            <person name="Espeso E."/>
            <person name="Fekete E."/>
            <person name="Flipphi M."/>
            <person name="Estrada C.G."/>
            <person name="Geysens S."/>
            <person name="Goldman G."/>
            <person name="de Groot P.W."/>
            <person name="Hansen K."/>
            <person name="Harris S.D."/>
            <person name="Heinekamp T."/>
            <person name="Helmstaedt K."/>
            <person name="Henrissat B."/>
            <person name="Hofmann G."/>
            <person name="Homan T."/>
            <person name="Horio T."/>
            <person name="Horiuchi H."/>
            <person name="James S."/>
            <person name="Jones M."/>
            <person name="Karaffa L."/>
            <person name="Karanyi Z."/>
            <person name="Kato M."/>
            <person name="Keller N."/>
            <person name="Kelly D.E."/>
            <person name="Kiel J.A."/>
            <person name="Kim J.M."/>
            <person name="van der Klei I.J."/>
            <person name="Klis F.M."/>
            <person name="Kovalchuk A."/>
            <person name="Krasevec N."/>
            <person name="Kubicek C.P."/>
            <person name="Liu B."/>
            <person name="Maccabe A."/>
            <person name="Meyer V."/>
            <person name="Mirabito P."/>
            <person name="Miskei M."/>
            <person name="Mos M."/>
            <person name="Mullins J."/>
            <person name="Nelson D.R."/>
            <person name="Nielsen J."/>
            <person name="Oakley B.R."/>
            <person name="Osmani S.A."/>
            <person name="Pakula T."/>
            <person name="Paszewski A."/>
            <person name="Paulsen I."/>
            <person name="Pilsyk S."/>
            <person name="Pocsi I."/>
            <person name="Punt P.J."/>
            <person name="Ram A.F."/>
            <person name="Ren Q."/>
            <person name="Robellet X."/>
            <person name="Robson G."/>
            <person name="Seiboth B."/>
            <person name="van Solingen P."/>
            <person name="Specht T."/>
            <person name="Sun J."/>
            <person name="Taheri-Talesh N."/>
            <person name="Takeshita N."/>
            <person name="Ussery D."/>
            <person name="vanKuyk P.A."/>
            <person name="Visser H."/>
            <person name="van de Vondervoort P.J."/>
            <person name="de Vries R.P."/>
            <person name="Walton J."/>
            <person name="Xiang X."/>
            <person name="Xiong Y."/>
            <person name="Zeng A.P."/>
            <person name="Brandt B.W."/>
            <person name="Cornell M.J."/>
            <person name="van den Hondel C.A."/>
            <person name="Visser J."/>
            <person name="Oliver S.G."/>
            <person name="Turner G."/>
        </authorList>
    </citation>
    <scope>GENOME REANNOTATION</scope>
    <source>
        <strain>FGSC A4 / ATCC 38163 / CBS 112.46 / NRRL 194 / M139</strain>
    </source>
</reference>
<reference key="4">
    <citation type="journal article" date="2007" name="Res. Microbiol.">
        <title>Multiple fungal enzymes possess cysteine synthase activity in vitro.</title>
        <authorList>
            <person name="Brzywczy J."/>
            <person name="Natorff R."/>
            <person name="Sienko M."/>
            <person name="Paszewski A."/>
        </authorList>
    </citation>
    <scope>FUNCTION</scope>
</reference>
<keyword id="KW-0028">Amino-acid biosynthesis</keyword>
<keyword id="KW-0198">Cysteine biosynthesis</keyword>
<keyword id="KW-0496">Mitochondrion</keyword>
<keyword id="KW-0663">Pyridoxal phosphate</keyword>
<keyword id="KW-1185">Reference proteome</keyword>
<keyword id="KW-0808">Transferase</keyword>
<keyword id="KW-0809">Transit peptide</keyword>
<gene>
    <name evidence="7 8" type="primary">cysB</name>
    <name evidence="7" type="synonym">cysE</name>
    <name type="ORF">AN8057</name>
</gene>
<proteinExistence type="inferred from homology"/>
<accession>P50867</accession>
<accession>C8V672</accession>
<accession>Q5AUH3</accession>
<name>CYSK_EMENI</name>
<evidence type="ECO:0000250" key="1">
    <source>
        <dbReference type="UniProtKB" id="O59701"/>
    </source>
</evidence>
<evidence type="ECO:0000250" key="2">
    <source>
        <dbReference type="UniProtKB" id="P0ABK5"/>
    </source>
</evidence>
<evidence type="ECO:0000250" key="3">
    <source>
        <dbReference type="UniProtKB" id="P16703"/>
    </source>
</evidence>
<evidence type="ECO:0000250" key="4">
    <source>
        <dbReference type="UniProtKB" id="P53206"/>
    </source>
</evidence>
<evidence type="ECO:0000255" key="5"/>
<evidence type="ECO:0000269" key="6">
    <source>
    </source>
</evidence>
<evidence type="ECO:0000303" key="7">
    <source>
    </source>
</evidence>
<evidence type="ECO:0000303" key="8">
    <source>
    </source>
</evidence>
<evidence type="ECO:0000305" key="9"/>
<evidence type="ECO:0000305" key="10">
    <source>
    </source>
</evidence>
<comment type="function">
    <text evidence="1 10">Catalyzes the conversion of O-succinyl-L-serine into cysteine, the last step in the cysteine biosynthesis pathway (By similarity). Can also use O-acetyl-L-serine (PubMed:17482430).</text>
</comment>
<comment type="catalytic activity">
    <reaction evidence="1">
        <text>O-succinyl-L-serine + hydrogen sulfide = L-cysteine + succinate</text>
        <dbReference type="Rhea" id="RHEA:53816"/>
        <dbReference type="ChEBI" id="CHEBI:29919"/>
        <dbReference type="ChEBI" id="CHEBI:30031"/>
        <dbReference type="ChEBI" id="CHEBI:35235"/>
        <dbReference type="ChEBI" id="CHEBI:136856"/>
    </reaction>
</comment>
<comment type="catalytic activity">
    <reaction evidence="6">
        <text>O-acetyl-L-serine + hydrogen sulfide = L-cysteine + acetate</text>
        <dbReference type="Rhea" id="RHEA:14829"/>
        <dbReference type="ChEBI" id="CHEBI:29919"/>
        <dbReference type="ChEBI" id="CHEBI:30089"/>
        <dbReference type="ChEBI" id="CHEBI:35235"/>
        <dbReference type="ChEBI" id="CHEBI:58340"/>
        <dbReference type="EC" id="2.5.1.47"/>
    </reaction>
</comment>
<comment type="cofactor">
    <cofactor evidence="2">
        <name>pyridoxal 5'-phosphate</name>
        <dbReference type="ChEBI" id="CHEBI:597326"/>
    </cofactor>
</comment>
<comment type="pathway">
    <text evidence="10">Amino-acid biosynthesis; L-cysteine biosynthesis; L-cysteine from L-serine: step 2/2.</text>
</comment>
<comment type="subcellular location">
    <subcellularLocation>
        <location evidence="4">Mitochondrion</location>
    </subcellularLocation>
</comment>
<comment type="similarity">
    <text evidence="9">Belongs to the cysteine synthase/cystathionine beta-synthase family.</text>
</comment>
<organism>
    <name type="scientific">Emericella nidulans (strain FGSC A4 / ATCC 38163 / CBS 112.46 / NRRL 194 / M139)</name>
    <name type="common">Aspergillus nidulans</name>
    <dbReference type="NCBI Taxonomy" id="227321"/>
    <lineage>
        <taxon>Eukaryota</taxon>
        <taxon>Fungi</taxon>
        <taxon>Dikarya</taxon>
        <taxon>Ascomycota</taxon>
        <taxon>Pezizomycotina</taxon>
        <taxon>Eurotiomycetes</taxon>
        <taxon>Eurotiomycetidae</taxon>
        <taxon>Eurotiales</taxon>
        <taxon>Aspergillaceae</taxon>
        <taxon>Aspergillus</taxon>
        <taxon>Aspergillus subgen. Nidulantes</taxon>
    </lineage>
</organism>
<sequence>MFRQSVRRFATAALRSAAESPYNVRVSQAQGFVNGLTEAIGNTPLIRLKRLSEETGSNILAKAEFQNPGGSVKDRAALYVVKDAEERGLLKPGGTVVEGTAGNTGIGLAHVCRSKGYKLVIYMPNTQSQGKIDLLRLLGAEVYPVPAVAFDNPENYNHKARRHAESLDNAVWTNQFDNTANRRAHIETTGPEIWAQTGGKLDAFTCSTGTGGTLAGITYYLKQASGGRVKSFLADPPGSVLHSYIQSGGKLVERSGSSITEGIGQGRITDNLQPDVGTLDGSLNISDEKTIEMIYRCLDEEGLYLGASSALNVVAAKEVAEKLGKGSTVVTILADGAYRYADRLFSKSWLESKGLRNAIPKHLEKYIVLP</sequence>
<feature type="transit peptide" description="Mitochondrion" evidence="5">
    <location>
        <begin position="1"/>
        <end position="16"/>
    </location>
</feature>
<feature type="chain" id="PRO_0000167127" description="Cysteine synthase 1">
    <location>
        <begin position="17"/>
        <end position="370"/>
    </location>
</feature>
<feature type="binding site" evidence="3">
    <location>
        <position position="103"/>
    </location>
    <ligand>
        <name>pyridoxal 5'-phosphate</name>
        <dbReference type="ChEBI" id="CHEBI:597326"/>
    </ligand>
</feature>
<feature type="binding site" evidence="3">
    <location>
        <begin position="209"/>
        <end position="213"/>
    </location>
    <ligand>
        <name>pyridoxal 5'-phosphate</name>
        <dbReference type="ChEBI" id="CHEBI:597326"/>
    </ligand>
</feature>
<feature type="binding site" evidence="3">
    <location>
        <position position="308"/>
    </location>
    <ligand>
        <name>pyridoxal 5'-phosphate</name>
        <dbReference type="ChEBI" id="CHEBI:597326"/>
    </ligand>
</feature>
<feature type="modified residue" description="N6-(pyridoxal phosphate)lysine" evidence="3">
    <location>
        <position position="73"/>
    </location>
</feature>
<feature type="sequence conflict" description="In Ref. 1; AAC06128." evidence="9" ref="1">
    <original>E</original>
    <variation>EK</variation>
    <location>
        <position position="38"/>
    </location>
</feature>